<protein>
    <recommendedName>
        <fullName evidence="3">Hippurate hydrolase</fullName>
        <ecNumber evidence="1">3.5.1.32</ecNumber>
    </recommendedName>
    <alternativeName>
        <fullName evidence="2">Benzoylglycine amidohydrolase</fullName>
    </alternativeName>
    <alternativeName>
        <fullName evidence="2">Hippuricase</fullName>
    </alternativeName>
</protein>
<name>HIPO_CAMJE</name>
<feature type="chain" id="PRO_0000061954" description="Hippurate hydrolase">
    <location>
        <begin position="1"/>
        <end position="383"/>
    </location>
</feature>
<feature type="sequence conflict" description="In Ref. 1; CAA85396." evidence="3" ref="1">
    <original>A</original>
    <variation>T</variation>
    <location>
        <position position="125"/>
    </location>
</feature>
<feature type="sequence conflict" description="In Ref. 1; CAA85396." evidence="3" ref="1">
    <original>I</original>
    <variation>V</variation>
    <location>
        <position position="213"/>
    </location>
</feature>
<feature type="sequence conflict" description="In Ref. 1; CAA85396." evidence="3" ref="1">
    <original>A</original>
    <variation>V</variation>
    <location>
        <position position="250"/>
    </location>
</feature>
<feature type="sequence conflict" description="In Ref. 1; CAA85396." evidence="3" ref="1">
    <original>I</original>
    <variation>L</variation>
    <location>
        <position position="278"/>
    </location>
</feature>
<dbReference type="EC" id="3.5.1.32" evidence="1"/>
<dbReference type="EMBL" id="Z36940">
    <property type="protein sequence ID" value="CAA85396.1"/>
    <property type="molecule type" value="Genomic_DNA"/>
</dbReference>
<dbReference type="EMBL" id="AL111168">
    <property type="protein sequence ID" value="CAL35103.1"/>
    <property type="molecule type" value="Genomic_DNA"/>
</dbReference>
<dbReference type="PIR" id="F81373">
    <property type="entry name" value="F81373"/>
</dbReference>
<dbReference type="PIR" id="I40762">
    <property type="entry name" value="I40762"/>
</dbReference>
<dbReference type="RefSeq" id="WP_002853394.1">
    <property type="nucleotide sequence ID" value="NZ_SZUC01000001.1"/>
</dbReference>
<dbReference type="RefSeq" id="YP_002344380.1">
    <property type="nucleotide sequence ID" value="NC_002163.1"/>
</dbReference>
<dbReference type="SMR" id="P45493"/>
<dbReference type="IntAct" id="P45493">
    <property type="interactions" value="5"/>
</dbReference>
<dbReference type="STRING" id="192222.Cj0985c"/>
<dbReference type="PaxDb" id="192222-Cj0985c"/>
<dbReference type="EnsemblBacteria" id="CAL35103">
    <property type="protein sequence ID" value="CAL35103"/>
    <property type="gene ID" value="Cj0985c"/>
</dbReference>
<dbReference type="GeneID" id="905276"/>
<dbReference type="KEGG" id="cje:Cj0985c"/>
<dbReference type="PATRIC" id="fig|192222.6.peg.968"/>
<dbReference type="eggNOG" id="COG1473">
    <property type="taxonomic scope" value="Bacteria"/>
</dbReference>
<dbReference type="HOGENOM" id="CLU_023257_1_1_7"/>
<dbReference type="OrthoDB" id="9777385at2"/>
<dbReference type="Proteomes" id="UP000000799">
    <property type="component" value="Chromosome"/>
</dbReference>
<dbReference type="GO" id="GO:0047980">
    <property type="term" value="F:hippurate hydrolase activity"/>
    <property type="evidence" value="ECO:0007669"/>
    <property type="project" value="UniProtKB-EC"/>
</dbReference>
<dbReference type="CDD" id="cd05666">
    <property type="entry name" value="M20_Acy1-like"/>
    <property type="match status" value="1"/>
</dbReference>
<dbReference type="FunFam" id="3.30.70.360:FF:000001">
    <property type="entry name" value="N-acetyldiaminopimelate deacetylase"/>
    <property type="match status" value="1"/>
</dbReference>
<dbReference type="Gene3D" id="3.30.70.360">
    <property type="match status" value="1"/>
</dbReference>
<dbReference type="Gene3D" id="3.40.630.10">
    <property type="entry name" value="Zn peptidases"/>
    <property type="match status" value="1"/>
</dbReference>
<dbReference type="InterPro" id="IPR017439">
    <property type="entry name" value="Amidohydrolase"/>
</dbReference>
<dbReference type="InterPro" id="IPR036264">
    <property type="entry name" value="Bact_exopeptidase_dim_dom"/>
</dbReference>
<dbReference type="InterPro" id="IPR002933">
    <property type="entry name" value="Peptidase_M20"/>
</dbReference>
<dbReference type="InterPro" id="IPR011650">
    <property type="entry name" value="Peptidase_M20_dimer"/>
</dbReference>
<dbReference type="NCBIfam" id="TIGR01891">
    <property type="entry name" value="amidohydrolases"/>
    <property type="match status" value="1"/>
</dbReference>
<dbReference type="PANTHER" id="PTHR11014:SF63">
    <property type="entry name" value="METALLOPEPTIDASE, PUTATIVE (AFU_ORTHOLOGUE AFUA_6G09600)-RELATED"/>
    <property type="match status" value="1"/>
</dbReference>
<dbReference type="PANTHER" id="PTHR11014">
    <property type="entry name" value="PEPTIDASE M20 FAMILY MEMBER"/>
    <property type="match status" value="1"/>
</dbReference>
<dbReference type="Pfam" id="PF07687">
    <property type="entry name" value="M20_dimer"/>
    <property type="match status" value="1"/>
</dbReference>
<dbReference type="Pfam" id="PF01546">
    <property type="entry name" value="Peptidase_M20"/>
    <property type="match status" value="1"/>
</dbReference>
<dbReference type="PIRSF" id="PIRSF005962">
    <property type="entry name" value="Pept_M20D_amidohydro"/>
    <property type="match status" value="1"/>
</dbReference>
<dbReference type="SUPFAM" id="SSF55031">
    <property type="entry name" value="Bacterial exopeptidase dimerisation domain"/>
    <property type="match status" value="1"/>
</dbReference>
<dbReference type="SUPFAM" id="SSF53187">
    <property type="entry name" value="Zn-dependent exopeptidases"/>
    <property type="match status" value="1"/>
</dbReference>
<evidence type="ECO:0000269" key="1">
    <source>
    </source>
</evidence>
<evidence type="ECO:0000303" key="2">
    <source>
    </source>
</evidence>
<evidence type="ECO:0000305" key="3"/>
<keyword id="KW-0378">Hydrolase</keyword>
<keyword id="KW-1185">Reference proteome</keyword>
<reference key="1">
    <citation type="journal article" date="1995" name="J. Bacteriol.">
        <title>Expression and characterization of Campylobacter jejuni benzoylglycine amidohydrolase (Hippuricase) gene in Escherichia coli.</title>
        <authorList>
            <person name="Hani E.K."/>
            <person name="Chan V.L."/>
        </authorList>
    </citation>
    <scope>NUCLEOTIDE SEQUENCE [GENOMIC DNA]</scope>
    <scope>FUNCTION</scope>
    <scope>CATALYTIC ACTIVITY</scope>
    <source>
        <strain>ATCC 43431 / TGH 9011 / Serotype O:3</strain>
    </source>
</reference>
<reference key="2">
    <citation type="journal article" date="2000" name="Nature">
        <title>The genome sequence of the food-borne pathogen Campylobacter jejuni reveals hypervariable sequences.</title>
        <authorList>
            <person name="Parkhill J."/>
            <person name="Wren B.W."/>
            <person name="Mungall K.L."/>
            <person name="Ketley J.M."/>
            <person name="Churcher C.M."/>
            <person name="Basham D."/>
            <person name="Chillingworth T."/>
            <person name="Davies R.M."/>
            <person name="Feltwell T."/>
            <person name="Holroyd S."/>
            <person name="Jagels K."/>
            <person name="Karlyshev A.V."/>
            <person name="Moule S."/>
            <person name="Pallen M.J."/>
            <person name="Penn C.W."/>
            <person name="Quail M.A."/>
            <person name="Rajandream M.A."/>
            <person name="Rutherford K.M."/>
            <person name="van Vliet A.H.M."/>
            <person name="Whitehead S."/>
            <person name="Barrell B.G."/>
        </authorList>
    </citation>
    <scope>NUCLEOTIDE SEQUENCE [LARGE SCALE GENOMIC DNA]</scope>
    <source>
        <strain>ATCC 700819 / NCTC 11168</strain>
    </source>
</reference>
<comment type="function">
    <text evidence="1">Cleaves hippuric acid into benzoic acid and glycine.</text>
</comment>
<comment type="catalytic activity">
    <reaction evidence="1">
        <text>N-benzoylglycine + H2O = benzoate + glycine</text>
        <dbReference type="Rhea" id="RHEA:10424"/>
        <dbReference type="ChEBI" id="CHEBI:15377"/>
        <dbReference type="ChEBI" id="CHEBI:16150"/>
        <dbReference type="ChEBI" id="CHEBI:57305"/>
        <dbReference type="ChEBI" id="CHEBI:606565"/>
        <dbReference type="EC" id="3.5.1.32"/>
    </reaction>
</comment>
<comment type="similarity">
    <text evidence="3">Belongs to the peptidase M20 family.</text>
</comment>
<proteinExistence type="evidence at protein level"/>
<organism>
    <name type="scientific">Campylobacter jejuni subsp. jejuni serotype O:2 (strain ATCC 700819 / NCTC 11168)</name>
    <dbReference type="NCBI Taxonomy" id="192222"/>
    <lineage>
        <taxon>Bacteria</taxon>
        <taxon>Pseudomonadati</taxon>
        <taxon>Campylobacterota</taxon>
        <taxon>Epsilonproteobacteria</taxon>
        <taxon>Campylobacterales</taxon>
        <taxon>Campylobacteraceae</taxon>
        <taxon>Campylobacter</taxon>
    </lineage>
</organism>
<gene>
    <name evidence="2" type="primary">hipO</name>
    <name type="ordered locus">Cj0985c</name>
</gene>
<sequence>MNLIPEILDLQGEFEKIRHQIHENPELGFDELCTAKLVAQKLKEFGYEVYEEIGKTGVVGVLKKGNSDKKIGLRADMDALPLQECTNLPYKSKKENVMHACGHDGHTTSLLLAAKYLASQNFNGALNLYFQPAEEGLGGAKAMIEDGLFEKFDSDYVFGWHNMPFGSDKKFYLKKGAMMASSDSYSIEVIGRGGHGSAPEKAKDPIYAASLLIVALQSIVSRNVDPQNSAVVSIGAFNAGHAFNIIPDIATIKMSVRALDNETRKLTEEKIYKICKGIAQANDIEIKINKNVVAPVTMNNDEAVDFASEVAKELFGEKNCEFNHRPLMASEDFGFFCEMKKCAYAFLENENDIYLHNSSYVFNDKLLARAASYYAKLALKYLK</sequence>
<accession>P45493</accession>
<accession>Q0P9R7</accession>
<accession>Q9PNV4</accession>